<comment type="function">
    <text evidence="1">Catalyzes the oxidation of either pyridoxine 5'-phosphate (PNP) or pyridoxamine 5'-phosphate (PMP) into pyridoxal 5'-phosphate (PLP).</text>
</comment>
<comment type="catalytic activity">
    <reaction evidence="1">
        <text>pyridoxamine 5'-phosphate + O2 + H2O = pyridoxal 5'-phosphate + H2O2 + NH4(+)</text>
        <dbReference type="Rhea" id="RHEA:15817"/>
        <dbReference type="ChEBI" id="CHEBI:15377"/>
        <dbReference type="ChEBI" id="CHEBI:15379"/>
        <dbReference type="ChEBI" id="CHEBI:16240"/>
        <dbReference type="ChEBI" id="CHEBI:28938"/>
        <dbReference type="ChEBI" id="CHEBI:58451"/>
        <dbReference type="ChEBI" id="CHEBI:597326"/>
        <dbReference type="EC" id="1.4.3.5"/>
    </reaction>
</comment>
<comment type="catalytic activity">
    <reaction evidence="1">
        <text>pyridoxine 5'-phosphate + O2 = pyridoxal 5'-phosphate + H2O2</text>
        <dbReference type="Rhea" id="RHEA:15149"/>
        <dbReference type="ChEBI" id="CHEBI:15379"/>
        <dbReference type="ChEBI" id="CHEBI:16240"/>
        <dbReference type="ChEBI" id="CHEBI:58589"/>
        <dbReference type="ChEBI" id="CHEBI:597326"/>
        <dbReference type="EC" id="1.4.3.5"/>
    </reaction>
</comment>
<comment type="cofactor">
    <cofactor evidence="1">
        <name>FMN</name>
        <dbReference type="ChEBI" id="CHEBI:58210"/>
    </cofactor>
    <text evidence="1">Binds 1 FMN per subunit.</text>
</comment>
<comment type="pathway">
    <text evidence="1">Cofactor metabolism; pyridoxal 5'-phosphate salvage; pyridoxal 5'-phosphate from pyridoxamine 5'-phosphate: step 1/1.</text>
</comment>
<comment type="pathway">
    <text evidence="1">Cofactor metabolism; pyridoxal 5'-phosphate salvage; pyridoxal 5'-phosphate from pyridoxine 5'-phosphate: step 1/1.</text>
</comment>
<comment type="subunit">
    <text evidence="1">Homodimer.</text>
</comment>
<comment type="similarity">
    <text evidence="1">Belongs to the pyridoxamine 5'-phosphate oxidase family.</text>
</comment>
<name>PDXH_VIBC3</name>
<proteinExistence type="inferred from homology"/>
<reference key="1">
    <citation type="submission" date="2007-03" db="EMBL/GenBank/DDBJ databases">
        <authorList>
            <person name="Heidelberg J."/>
        </authorList>
    </citation>
    <scope>NUCLEOTIDE SEQUENCE [LARGE SCALE GENOMIC DNA]</scope>
    <source>
        <strain>ATCC 39541 / Classical Ogawa 395 / O395</strain>
    </source>
</reference>
<reference key="2">
    <citation type="journal article" date="2008" name="PLoS ONE">
        <title>A recalibrated molecular clock and independent origins for the cholera pandemic clones.</title>
        <authorList>
            <person name="Feng L."/>
            <person name="Reeves P.R."/>
            <person name="Lan R."/>
            <person name="Ren Y."/>
            <person name="Gao C."/>
            <person name="Zhou Z."/>
            <person name="Ren Y."/>
            <person name="Cheng J."/>
            <person name="Wang W."/>
            <person name="Wang J."/>
            <person name="Qian W."/>
            <person name="Li D."/>
            <person name="Wang L."/>
        </authorList>
    </citation>
    <scope>NUCLEOTIDE SEQUENCE [LARGE SCALE GENOMIC DNA]</scope>
    <source>
        <strain>ATCC 39541 / Classical Ogawa 395 / O395</strain>
    </source>
</reference>
<gene>
    <name evidence="1" type="primary">pdxH</name>
    <name type="ordered locus">VC0395_0163</name>
    <name type="ordered locus">VC395_A1101</name>
</gene>
<organism>
    <name type="scientific">Vibrio cholerae serotype O1 (strain ATCC 39541 / Classical Ogawa 395 / O395)</name>
    <dbReference type="NCBI Taxonomy" id="345073"/>
    <lineage>
        <taxon>Bacteria</taxon>
        <taxon>Pseudomonadati</taxon>
        <taxon>Pseudomonadota</taxon>
        <taxon>Gammaproteobacteria</taxon>
        <taxon>Vibrionales</taxon>
        <taxon>Vibrionaceae</taxon>
        <taxon>Vibrio</taxon>
    </lineage>
</organism>
<feature type="chain" id="PRO_1000073639" description="Pyridoxine/pyridoxamine 5'-phosphate oxidase">
    <location>
        <begin position="1"/>
        <end position="211"/>
    </location>
</feature>
<feature type="binding site" evidence="1">
    <location>
        <begin position="7"/>
        <end position="10"/>
    </location>
    <ligand>
        <name>substrate</name>
    </ligand>
</feature>
<feature type="binding site" evidence="1">
    <location>
        <begin position="60"/>
        <end position="65"/>
    </location>
    <ligand>
        <name>FMN</name>
        <dbReference type="ChEBI" id="CHEBI:58210"/>
    </ligand>
</feature>
<feature type="binding site" evidence="1">
    <location>
        <position position="65"/>
    </location>
    <ligand>
        <name>substrate</name>
    </ligand>
</feature>
<feature type="binding site" evidence="1">
    <location>
        <begin position="75"/>
        <end position="76"/>
    </location>
    <ligand>
        <name>FMN</name>
        <dbReference type="ChEBI" id="CHEBI:58210"/>
    </ligand>
</feature>
<feature type="binding site" evidence="1">
    <location>
        <position position="81"/>
    </location>
    <ligand>
        <name>FMN</name>
        <dbReference type="ChEBI" id="CHEBI:58210"/>
    </ligand>
</feature>
<feature type="binding site" evidence="1">
    <location>
        <position position="82"/>
    </location>
    <ligand>
        <name>FMN</name>
        <dbReference type="ChEBI" id="CHEBI:58210"/>
    </ligand>
</feature>
<feature type="binding site" evidence="1">
    <location>
        <position position="104"/>
    </location>
    <ligand>
        <name>FMN</name>
        <dbReference type="ChEBI" id="CHEBI:58210"/>
    </ligand>
</feature>
<feature type="binding site" evidence="1">
    <location>
        <position position="122"/>
    </location>
    <ligand>
        <name>substrate</name>
    </ligand>
</feature>
<feature type="binding site" evidence="1">
    <location>
        <position position="126"/>
    </location>
    <ligand>
        <name>substrate</name>
    </ligand>
</feature>
<feature type="binding site" evidence="1">
    <location>
        <position position="130"/>
    </location>
    <ligand>
        <name>substrate</name>
    </ligand>
</feature>
<feature type="binding site" evidence="1">
    <location>
        <begin position="139"/>
        <end position="140"/>
    </location>
    <ligand>
        <name>FMN</name>
        <dbReference type="ChEBI" id="CHEBI:58210"/>
    </ligand>
</feature>
<feature type="binding site" evidence="1">
    <location>
        <position position="184"/>
    </location>
    <ligand>
        <name>FMN</name>
        <dbReference type="ChEBI" id="CHEBI:58210"/>
    </ligand>
</feature>
<feature type="binding site" evidence="1">
    <location>
        <begin position="190"/>
        <end position="192"/>
    </location>
    <ligand>
        <name>substrate</name>
    </ligand>
</feature>
<feature type="binding site" evidence="1">
    <location>
        <position position="194"/>
    </location>
    <ligand>
        <name>FMN</name>
        <dbReference type="ChEBI" id="CHEBI:58210"/>
    </ligand>
</feature>
<dbReference type="EC" id="1.4.3.5" evidence="1"/>
<dbReference type="EMBL" id="CP000626">
    <property type="protein sequence ID" value="ABQ19144.1"/>
    <property type="molecule type" value="Genomic_DNA"/>
</dbReference>
<dbReference type="EMBL" id="CP001236">
    <property type="protein sequence ID" value="ACP11931.1"/>
    <property type="molecule type" value="Genomic_DNA"/>
</dbReference>
<dbReference type="RefSeq" id="WP_000365911.1">
    <property type="nucleotide sequence ID" value="NZ_JAACZH010000003.1"/>
</dbReference>
<dbReference type="SMR" id="A5F176"/>
<dbReference type="KEGG" id="vco:VC0395_0163"/>
<dbReference type="KEGG" id="vcr:VC395_A1101"/>
<dbReference type="PATRIC" id="fig|345073.21.peg.3824"/>
<dbReference type="eggNOG" id="COG0259">
    <property type="taxonomic scope" value="Bacteria"/>
</dbReference>
<dbReference type="HOGENOM" id="CLU_032263_2_2_6"/>
<dbReference type="OrthoDB" id="9780392at2"/>
<dbReference type="UniPathway" id="UPA01068">
    <property type="reaction ID" value="UER00304"/>
</dbReference>
<dbReference type="UniPathway" id="UPA01068">
    <property type="reaction ID" value="UER00305"/>
</dbReference>
<dbReference type="Proteomes" id="UP000000249">
    <property type="component" value="Chromosome 1"/>
</dbReference>
<dbReference type="GO" id="GO:0010181">
    <property type="term" value="F:FMN binding"/>
    <property type="evidence" value="ECO:0007669"/>
    <property type="project" value="UniProtKB-UniRule"/>
</dbReference>
<dbReference type="GO" id="GO:0004733">
    <property type="term" value="F:pyridoxamine phosphate oxidase activity"/>
    <property type="evidence" value="ECO:0007669"/>
    <property type="project" value="UniProtKB-UniRule"/>
</dbReference>
<dbReference type="GO" id="GO:0008615">
    <property type="term" value="P:pyridoxine biosynthetic process"/>
    <property type="evidence" value="ECO:0007669"/>
    <property type="project" value="UniProtKB-KW"/>
</dbReference>
<dbReference type="FunFam" id="2.30.110.10:FF:000001">
    <property type="entry name" value="Pyridoxine/pyridoxamine 5'-phosphate oxidase"/>
    <property type="match status" value="1"/>
</dbReference>
<dbReference type="Gene3D" id="2.30.110.10">
    <property type="entry name" value="Electron Transport, Fmn-binding Protein, Chain A"/>
    <property type="match status" value="1"/>
</dbReference>
<dbReference type="HAMAP" id="MF_01629">
    <property type="entry name" value="PdxH"/>
    <property type="match status" value="1"/>
</dbReference>
<dbReference type="InterPro" id="IPR000659">
    <property type="entry name" value="Pyridox_Oxase"/>
</dbReference>
<dbReference type="InterPro" id="IPR019740">
    <property type="entry name" value="Pyridox_Oxase_CS"/>
</dbReference>
<dbReference type="InterPro" id="IPR011576">
    <property type="entry name" value="Pyridox_Oxase_N"/>
</dbReference>
<dbReference type="InterPro" id="IPR019576">
    <property type="entry name" value="Pyridoxamine_oxidase_dimer_C"/>
</dbReference>
<dbReference type="InterPro" id="IPR012349">
    <property type="entry name" value="Split_barrel_FMN-bd"/>
</dbReference>
<dbReference type="NCBIfam" id="TIGR00558">
    <property type="entry name" value="pdxH"/>
    <property type="match status" value="1"/>
</dbReference>
<dbReference type="NCBIfam" id="NF004231">
    <property type="entry name" value="PRK05679.1"/>
    <property type="match status" value="1"/>
</dbReference>
<dbReference type="PANTHER" id="PTHR10851:SF0">
    <property type="entry name" value="PYRIDOXINE-5'-PHOSPHATE OXIDASE"/>
    <property type="match status" value="1"/>
</dbReference>
<dbReference type="PANTHER" id="PTHR10851">
    <property type="entry name" value="PYRIDOXINE-5-PHOSPHATE OXIDASE"/>
    <property type="match status" value="1"/>
</dbReference>
<dbReference type="Pfam" id="PF10590">
    <property type="entry name" value="PNP_phzG_C"/>
    <property type="match status" value="1"/>
</dbReference>
<dbReference type="Pfam" id="PF01243">
    <property type="entry name" value="PNPOx_N"/>
    <property type="match status" value="1"/>
</dbReference>
<dbReference type="PIRSF" id="PIRSF000190">
    <property type="entry name" value="Pyd_amn-ph_oxd"/>
    <property type="match status" value="1"/>
</dbReference>
<dbReference type="SUPFAM" id="SSF50475">
    <property type="entry name" value="FMN-binding split barrel"/>
    <property type="match status" value="1"/>
</dbReference>
<dbReference type="PROSITE" id="PS01064">
    <property type="entry name" value="PYRIDOX_OXIDASE"/>
    <property type="match status" value="1"/>
</dbReference>
<protein>
    <recommendedName>
        <fullName evidence="1">Pyridoxine/pyridoxamine 5'-phosphate oxidase</fullName>
        <ecNumber evidence="1">1.4.3.5</ecNumber>
    </recommendedName>
    <alternativeName>
        <fullName evidence="1">PNP/PMP oxidase</fullName>
        <shortName evidence="1">PNPOx</shortName>
    </alternativeName>
    <alternativeName>
        <fullName evidence="1">Pyridoxal 5'-phosphate synthase</fullName>
    </alternativeName>
</protein>
<accession>A5F176</accession>
<accession>C3M718</accession>
<evidence type="ECO:0000255" key="1">
    <source>
        <dbReference type="HAMAP-Rule" id="MF_01629"/>
    </source>
</evidence>
<sequence>MDLSDIRREYIHGGLRRKDLQANPIDQFNLWLQQAIDANLSDPTAMTVATVDEHGQPFQRIVLLKNVDDVGFVFYTNLGSRKAQHIAHNNKISLHFPWHPLERQVHITGVAEKLTAMENMKYFMSRPKESQIAAIASHQSSRISARGVLEGKYLELKQKFANGEIPVPSFWGGYRIRPESLEFWQGGEHRLHDRFLYSRQDDNWTVDRLAP</sequence>
<keyword id="KW-0285">Flavoprotein</keyword>
<keyword id="KW-0288">FMN</keyword>
<keyword id="KW-0560">Oxidoreductase</keyword>
<keyword id="KW-0664">Pyridoxine biosynthesis</keyword>